<keyword id="KW-0963">Cytoplasm</keyword>
<keyword id="KW-0378">Hydrolase</keyword>
<keyword id="KW-0540">Nuclease</keyword>
<keyword id="KW-1185">Reference proteome</keyword>
<keyword id="KW-0690">Ribosome biogenesis</keyword>
<comment type="function">
    <text evidence="1">Could be a nuclease involved in processing of the 5'-end of pre-16S rRNA.</text>
</comment>
<comment type="subcellular location">
    <subcellularLocation>
        <location evidence="1">Cytoplasm</location>
    </subcellularLocation>
</comment>
<comment type="similarity">
    <text evidence="1">Belongs to the YqgF nuclease family.</text>
</comment>
<accession>Q8D337</accession>
<feature type="chain" id="PRO_0000172174" description="Putative pre-16S rRNA nuclease">
    <location>
        <begin position="1"/>
        <end position="144"/>
    </location>
</feature>
<proteinExistence type="inferred from homology"/>
<organism>
    <name type="scientific">Wigglesworthia glossinidia brevipalpis</name>
    <dbReference type="NCBI Taxonomy" id="36870"/>
    <lineage>
        <taxon>Bacteria</taxon>
        <taxon>Pseudomonadati</taxon>
        <taxon>Pseudomonadota</taxon>
        <taxon>Gammaproteobacteria</taxon>
        <taxon>Enterobacterales</taxon>
        <taxon>Erwiniaceae</taxon>
        <taxon>Wigglesworthia</taxon>
    </lineage>
</organism>
<name>YQGF_WIGBR</name>
<protein>
    <recommendedName>
        <fullName evidence="1">Putative pre-16S rRNA nuclease</fullName>
        <ecNumber evidence="1">3.1.-.-</ecNumber>
    </recommendedName>
</protein>
<sequence>MMYRNNLLISFDFGTKNIGVAIGQMKTNTSKPLESVSYVKGVPNWGKINNIILLWEPKYIIVGLPLNMDGSYQTSTIKAKKFAKQLRNKFFMPVMMHDERLTTIEAKSVLFKKYGYKGLKKKLIDSESAVIILDSWMNSIYFKK</sequence>
<gene>
    <name evidence="1" type="primary">yqgF</name>
    <name type="ordered locus">WIGBR1640</name>
</gene>
<reference key="1">
    <citation type="journal article" date="2002" name="Nat. Genet.">
        <title>Genome sequence of the endocellular obligate symbiont of tsetse flies, Wigglesworthia glossinidia.</title>
        <authorList>
            <person name="Akman L."/>
            <person name="Yamashita A."/>
            <person name="Watanabe H."/>
            <person name="Oshima K."/>
            <person name="Shiba T."/>
            <person name="Hattori M."/>
            <person name="Aksoy S."/>
        </authorList>
    </citation>
    <scope>NUCLEOTIDE SEQUENCE [LARGE SCALE GENOMIC DNA]</scope>
</reference>
<evidence type="ECO:0000255" key="1">
    <source>
        <dbReference type="HAMAP-Rule" id="MF_00651"/>
    </source>
</evidence>
<dbReference type="EC" id="3.1.-.-" evidence="1"/>
<dbReference type="EMBL" id="BA000021">
    <property type="protein sequence ID" value="BAC24310.1"/>
    <property type="molecule type" value="Genomic_DNA"/>
</dbReference>
<dbReference type="SMR" id="Q8D337"/>
<dbReference type="STRING" id="36870.gene:10368652"/>
<dbReference type="KEGG" id="wbr:yqgF"/>
<dbReference type="eggNOG" id="COG0816">
    <property type="taxonomic scope" value="Bacteria"/>
</dbReference>
<dbReference type="HOGENOM" id="CLU_098240_3_0_6"/>
<dbReference type="OrthoDB" id="9796140at2"/>
<dbReference type="Proteomes" id="UP000000562">
    <property type="component" value="Chromosome"/>
</dbReference>
<dbReference type="GO" id="GO:0005829">
    <property type="term" value="C:cytosol"/>
    <property type="evidence" value="ECO:0007669"/>
    <property type="project" value="TreeGrafter"/>
</dbReference>
<dbReference type="GO" id="GO:0004518">
    <property type="term" value="F:nuclease activity"/>
    <property type="evidence" value="ECO:0007669"/>
    <property type="project" value="UniProtKB-KW"/>
</dbReference>
<dbReference type="GO" id="GO:0000967">
    <property type="term" value="P:rRNA 5'-end processing"/>
    <property type="evidence" value="ECO:0007669"/>
    <property type="project" value="UniProtKB-UniRule"/>
</dbReference>
<dbReference type="CDD" id="cd16964">
    <property type="entry name" value="YqgF"/>
    <property type="match status" value="1"/>
</dbReference>
<dbReference type="Gene3D" id="3.30.420.140">
    <property type="entry name" value="YqgF/RNase H-like domain"/>
    <property type="match status" value="1"/>
</dbReference>
<dbReference type="HAMAP" id="MF_00651">
    <property type="entry name" value="Nuclease_YqgF"/>
    <property type="match status" value="1"/>
</dbReference>
<dbReference type="InterPro" id="IPR012337">
    <property type="entry name" value="RNaseH-like_sf"/>
</dbReference>
<dbReference type="InterPro" id="IPR005227">
    <property type="entry name" value="YqgF"/>
</dbReference>
<dbReference type="InterPro" id="IPR006641">
    <property type="entry name" value="YqgF/RNaseH-like_dom"/>
</dbReference>
<dbReference type="InterPro" id="IPR037027">
    <property type="entry name" value="YqgF/RNaseH-like_dom_sf"/>
</dbReference>
<dbReference type="NCBIfam" id="TIGR00250">
    <property type="entry name" value="RNAse_H_YqgF"/>
    <property type="match status" value="1"/>
</dbReference>
<dbReference type="PANTHER" id="PTHR33317">
    <property type="entry name" value="POLYNUCLEOTIDYL TRANSFERASE, RIBONUCLEASE H-LIKE SUPERFAMILY PROTEIN"/>
    <property type="match status" value="1"/>
</dbReference>
<dbReference type="PANTHER" id="PTHR33317:SF4">
    <property type="entry name" value="POLYNUCLEOTIDYL TRANSFERASE, RIBONUCLEASE H-LIKE SUPERFAMILY PROTEIN"/>
    <property type="match status" value="1"/>
</dbReference>
<dbReference type="Pfam" id="PF03652">
    <property type="entry name" value="RuvX"/>
    <property type="match status" value="1"/>
</dbReference>
<dbReference type="SMART" id="SM00732">
    <property type="entry name" value="YqgFc"/>
    <property type="match status" value="1"/>
</dbReference>
<dbReference type="SUPFAM" id="SSF53098">
    <property type="entry name" value="Ribonuclease H-like"/>
    <property type="match status" value="1"/>
</dbReference>